<comment type="function">
    <molecule>CLE10p</molecule>
    <text evidence="6 7 8">Extracellular signal peptide that regulates cell fate. Represses root apical meristem maintenance. Regulates the transition of protophloem cells from proliferation to differentiation, thus impinging on postembryonic growth capacity of the root meristem; this signaling pathway requires CRN and CLV2 (PubMed:28607033).</text>
</comment>
<comment type="subcellular location">
    <molecule>CLE10p</molecule>
    <subcellularLocation>
        <location evidence="1">Secreted</location>
        <location evidence="1">Extracellular space</location>
    </subcellularLocation>
</comment>
<comment type="tissue specificity">
    <molecule>CLE10p</molecule>
    <text evidence="5">Expressed in stems, apex, leaves, flowers, siliques and pollen.</text>
</comment>
<comment type="PTM">
    <molecule>CLE10p</molecule>
    <text evidence="1">The O-glycosylation (arabinosylation) of the hydroxyproline Pro-102 enhances binding affinity of the CLE10p peptide for its receptor.</text>
</comment>
<comment type="similarity">
    <text evidence="10">Belongs to the CLV3/ESR signal peptide family.</text>
</comment>
<comment type="sequence caution" evidence="10">
    <conflict type="erroneous gene model prediction">
        <sequence resource="EMBL-CDS" id="AAG52495"/>
    </conflict>
</comment>
<proteinExistence type="evidence at protein level"/>
<sequence length="107" mass="12553">MKTNRNRPINILIVFFLLTTARAATRNWTNRTHRTVPKVQHAYYAYPHRSCESFSRPYARSMCIELERIHRSSRQPLFSPPPPPTEIDQRYGVEKRLVPSGPNPLHN</sequence>
<name>CLE10_ARATH</name>
<organism>
    <name type="scientific">Arabidopsis thaliana</name>
    <name type="common">Mouse-ear cress</name>
    <dbReference type="NCBI Taxonomy" id="3702"/>
    <lineage>
        <taxon>Eukaryota</taxon>
        <taxon>Viridiplantae</taxon>
        <taxon>Streptophyta</taxon>
        <taxon>Embryophyta</taxon>
        <taxon>Tracheophyta</taxon>
        <taxon>Spermatophyta</taxon>
        <taxon>Magnoliopsida</taxon>
        <taxon>eudicotyledons</taxon>
        <taxon>Gunneridae</taxon>
        <taxon>Pentapetalae</taxon>
        <taxon>rosids</taxon>
        <taxon>malvids</taxon>
        <taxon>Brassicales</taxon>
        <taxon>Brassicaceae</taxon>
        <taxon>Camelineae</taxon>
        <taxon>Arabidopsis</taxon>
    </lineage>
</organism>
<dbReference type="EMBL" id="AC018364">
    <property type="protein sequence ID" value="AAG52495.1"/>
    <property type="status" value="ALT_SEQ"/>
    <property type="molecule type" value="Genomic_DNA"/>
</dbReference>
<dbReference type="EMBL" id="CP002684">
    <property type="protein sequence ID" value="AEE34910.1"/>
    <property type="molecule type" value="Genomic_DNA"/>
</dbReference>
<dbReference type="EMBL" id="DQ056515">
    <property type="protein sequence ID" value="AAY78671.1"/>
    <property type="molecule type" value="mRNA"/>
</dbReference>
<dbReference type="RefSeq" id="NP_564958.2">
    <property type="nucleotide sequence ID" value="NM_105599.3"/>
</dbReference>
<dbReference type="PDB" id="2MID">
    <property type="method" value="NMR"/>
    <property type="chains" value="A=96-107"/>
</dbReference>
<dbReference type="PDBsum" id="2MID"/>
<dbReference type="SMR" id="Q4PSX1"/>
<dbReference type="STRING" id="3702.Q4PSX1"/>
<dbReference type="GlyCosmos" id="Q4PSX1">
    <property type="glycosylation" value="3 sites, No reported glycans"/>
</dbReference>
<dbReference type="GlyGen" id="Q4PSX1">
    <property type="glycosylation" value="2 sites"/>
</dbReference>
<dbReference type="PaxDb" id="3702-AT1G69320.1"/>
<dbReference type="EnsemblPlants" id="AT1G69320.1">
    <property type="protein sequence ID" value="AT1G69320.1"/>
    <property type="gene ID" value="AT1G69320"/>
</dbReference>
<dbReference type="GeneID" id="843263"/>
<dbReference type="Gramene" id="AT1G69320.1">
    <property type="protein sequence ID" value="AT1G69320.1"/>
    <property type="gene ID" value="AT1G69320"/>
</dbReference>
<dbReference type="KEGG" id="ath:AT1G69320"/>
<dbReference type="Araport" id="AT1G69320"/>
<dbReference type="TAIR" id="AT1G69320">
    <property type="gene designation" value="CLE10"/>
</dbReference>
<dbReference type="eggNOG" id="ENOG502S9T8">
    <property type="taxonomic scope" value="Eukaryota"/>
</dbReference>
<dbReference type="HOGENOM" id="CLU_169217_0_0_1"/>
<dbReference type="InParanoid" id="Q4PSX1"/>
<dbReference type="OMA" id="RYCESFT"/>
<dbReference type="OrthoDB" id="753861at2759"/>
<dbReference type="PhylomeDB" id="Q4PSX1"/>
<dbReference type="EvolutionaryTrace" id="Q4PSX1"/>
<dbReference type="PRO" id="PR:Q4PSX1"/>
<dbReference type="Proteomes" id="UP000006548">
    <property type="component" value="Chromosome 1"/>
</dbReference>
<dbReference type="ExpressionAtlas" id="Q4PSX1">
    <property type="expression patterns" value="baseline and differential"/>
</dbReference>
<dbReference type="GO" id="GO:0048046">
    <property type="term" value="C:apoplast"/>
    <property type="evidence" value="ECO:0000250"/>
    <property type="project" value="UniProtKB"/>
</dbReference>
<dbReference type="GO" id="GO:0033612">
    <property type="term" value="F:receptor serine/threonine kinase binding"/>
    <property type="evidence" value="ECO:0000250"/>
    <property type="project" value="UniProtKB"/>
</dbReference>
<dbReference type="GO" id="GO:0045168">
    <property type="term" value="P:cell-cell signaling involved in cell fate commitment"/>
    <property type="evidence" value="ECO:0000250"/>
    <property type="project" value="UniProtKB"/>
</dbReference>
<dbReference type="GO" id="GO:0010078">
    <property type="term" value="P:maintenance of root meristem identity"/>
    <property type="evidence" value="ECO:0000314"/>
    <property type="project" value="UniProtKB"/>
</dbReference>
<dbReference type="GO" id="GO:0010088">
    <property type="term" value="P:phloem development"/>
    <property type="evidence" value="ECO:0000314"/>
    <property type="project" value="UniProtKB"/>
</dbReference>
<dbReference type="GO" id="GO:0045595">
    <property type="term" value="P:regulation of cell differentiation"/>
    <property type="evidence" value="ECO:0000314"/>
    <property type="project" value="UniProtKB"/>
</dbReference>
<dbReference type="InterPro" id="IPR039618">
    <property type="entry name" value="CLE9-13"/>
</dbReference>
<dbReference type="PANTHER" id="PTHR34359">
    <property type="entry name" value="CLAVATA3/ESR (CLE)-RELATED PROTEIN 10"/>
    <property type="match status" value="1"/>
</dbReference>
<dbReference type="PANTHER" id="PTHR34359:SF23">
    <property type="entry name" value="CLAVATA3_ESR (CLE)-RELATED PROTEIN 10"/>
    <property type="match status" value="1"/>
</dbReference>
<accession>Q4PSX1</accession>
<accession>Q9C984</accession>
<keyword id="KW-0002">3D-structure</keyword>
<keyword id="KW-0217">Developmental protein</keyword>
<keyword id="KW-0221">Differentiation</keyword>
<keyword id="KW-0325">Glycoprotein</keyword>
<keyword id="KW-0379">Hydroxylation</keyword>
<keyword id="KW-1185">Reference proteome</keyword>
<keyword id="KW-0964">Secreted</keyword>
<keyword id="KW-0732">Signal</keyword>
<feature type="signal peptide" evidence="2">
    <location>
        <begin position="1"/>
        <end position="23"/>
    </location>
</feature>
<feature type="chain" id="PRO_0000401251" description="CLAVATA3/ESR (CLE)-related protein 10">
    <location>
        <begin position="24"/>
        <end position="107"/>
    </location>
</feature>
<feature type="peptide" id="PRO_0000401252" description="CLE10p" evidence="1">
    <location>
        <begin position="96"/>
        <end position="107"/>
    </location>
</feature>
<feature type="region of interest" description="Disordered" evidence="4">
    <location>
        <begin position="73"/>
        <end position="107"/>
    </location>
</feature>
<feature type="compositionally biased region" description="Basic and acidic residues" evidence="4">
    <location>
        <begin position="87"/>
        <end position="97"/>
    </location>
</feature>
<feature type="modified residue" description="Hydroxyproline" evidence="1">
    <location>
        <position position="99"/>
    </location>
</feature>
<feature type="modified residue" description="Hydroxyproline" evidence="1">
    <location>
        <position position="102"/>
    </location>
</feature>
<feature type="glycosylation site" description="N-linked (GlcNAc...) asparagine" evidence="3">
    <location>
        <position position="27"/>
    </location>
</feature>
<feature type="glycosylation site" description="N-linked (GlcNAc...) asparagine" evidence="3">
    <location>
        <position position="30"/>
    </location>
</feature>
<feature type="glycosylation site" description="O-linked (Ara...) hydroxyproline" evidence="1">
    <location>
        <position position="102"/>
    </location>
</feature>
<feature type="strand" evidence="13">
    <location>
        <begin position="98"/>
        <end position="103"/>
    </location>
</feature>
<reference key="1">
    <citation type="journal article" date="2000" name="Nature">
        <title>Sequence and analysis of chromosome 1 of the plant Arabidopsis thaliana.</title>
        <authorList>
            <person name="Theologis A."/>
            <person name="Ecker J.R."/>
            <person name="Palm C.J."/>
            <person name="Federspiel N.A."/>
            <person name="Kaul S."/>
            <person name="White O."/>
            <person name="Alonso J."/>
            <person name="Altafi H."/>
            <person name="Araujo R."/>
            <person name="Bowman C.L."/>
            <person name="Brooks S.Y."/>
            <person name="Buehler E."/>
            <person name="Chan A."/>
            <person name="Chao Q."/>
            <person name="Chen H."/>
            <person name="Cheuk R.F."/>
            <person name="Chin C.W."/>
            <person name="Chung M.K."/>
            <person name="Conn L."/>
            <person name="Conway A.B."/>
            <person name="Conway A.R."/>
            <person name="Creasy T.H."/>
            <person name="Dewar K."/>
            <person name="Dunn P."/>
            <person name="Etgu P."/>
            <person name="Feldblyum T.V."/>
            <person name="Feng J.-D."/>
            <person name="Fong B."/>
            <person name="Fujii C.Y."/>
            <person name="Gill J.E."/>
            <person name="Goldsmith A.D."/>
            <person name="Haas B."/>
            <person name="Hansen N.F."/>
            <person name="Hughes B."/>
            <person name="Huizar L."/>
            <person name="Hunter J.L."/>
            <person name="Jenkins J."/>
            <person name="Johnson-Hopson C."/>
            <person name="Khan S."/>
            <person name="Khaykin E."/>
            <person name="Kim C.J."/>
            <person name="Koo H.L."/>
            <person name="Kremenetskaia I."/>
            <person name="Kurtz D.B."/>
            <person name="Kwan A."/>
            <person name="Lam B."/>
            <person name="Langin-Hooper S."/>
            <person name="Lee A."/>
            <person name="Lee J.M."/>
            <person name="Lenz C.A."/>
            <person name="Li J.H."/>
            <person name="Li Y.-P."/>
            <person name="Lin X."/>
            <person name="Liu S.X."/>
            <person name="Liu Z.A."/>
            <person name="Luros J.S."/>
            <person name="Maiti R."/>
            <person name="Marziali A."/>
            <person name="Militscher J."/>
            <person name="Miranda M."/>
            <person name="Nguyen M."/>
            <person name="Nierman W.C."/>
            <person name="Osborne B.I."/>
            <person name="Pai G."/>
            <person name="Peterson J."/>
            <person name="Pham P.K."/>
            <person name="Rizzo M."/>
            <person name="Rooney T."/>
            <person name="Rowley D."/>
            <person name="Sakano H."/>
            <person name="Salzberg S.L."/>
            <person name="Schwartz J.R."/>
            <person name="Shinn P."/>
            <person name="Southwick A.M."/>
            <person name="Sun H."/>
            <person name="Tallon L.J."/>
            <person name="Tambunga G."/>
            <person name="Toriumi M.J."/>
            <person name="Town C.D."/>
            <person name="Utterback T."/>
            <person name="Van Aken S."/>
            <person name="Vaysberg M."/>
            <person name="Vysotskaia V.S."/>
            <person name="Walker M."/>
            <person name="Wu D."/>
            <person name="Yu G."/>
            <person name="Fraser C.M."/>
            <person name="Venter J.C."/>
            <person name="Davis R.W."/>
        </authorList>
    </citation>
    <scope>NUCLEOTIDE SEQUENCE [LARGE SCALE GENOMIC DNA]</scope>
    <source>
        <strain>cv. Columbia</strain>
    </source>
</reference>
<reference key="2">
    <citation type="journal article" date="2017" name="Plant J.">
        <title>Araport11: a complete reannotation of the Arabidopsis thaliana reference genome.</title>
        <authorList>
            <person name="Cheng C.Y."/>
            <person name="Krishnakumar V."/>
            <person name="Chan A.P."/>
            <person name="Thibaud-Nissen F."/>
            <person name="Schobel S."/>
            <person name="Town C.D."/>
        </authorList>
    </citation>
    <scope>GENOME REANNOTATION</scope>
    <source>
        <strain>cv. Columbia</strain>
    </source>
</reference>
<reference key="3">
    <citation type="journal article" date="2006" name="Plant Biotechnol. J.">
        <title>Simultaneous high-throughput recombinational cloning of open reading frames in closed and open configurations.</title>
        <authorList>
            <person name="Underwood B.A."/>
            <person name="Vanderhaeghen R."/>
            <person name="Whitford R."/>
            <person name="Town C.D."/>
            <person name="Hilson P."/>
        </authorList>
    </citation>
    <scope>NUCLEOTIDE SEQUENCE [LARGE SCALE MRNA]</scope>
    <source>
        <strain>cv. Columbia</strain>
    </source>
</reference>
<reference key="4">
    <citation type="journal article" date="2001" name="Plant Physiol.">
        <title>A large family of genes that share homology with CLAVATA3.</title>
        <authorList>
            <person name="Cock J.M."/>
            <person name="McCormick S."/>
        </authorList>
    </citation>
    <scope>GENE FAMILY</scope>
    <scope>NOMENCLATURE</scope>
</reference>
<reference key="5">
    <citation type="journal article" date="2003" name="Plant Mol. Biol.">
        <title>The Arabidopsis CLV3-like (CLE) genes are expressed in diverse tissues and encode secreted proteins.</title>
        <authorList>
            <person name="Sharma V.K."/>
            <person name="Ramirez J."/>
            <person name="Fletcher J.C."/>
        </authorList>
    </citation>
    <scope>TISSUE SPECIFICITY</scope>
</reference>
<reference key="6">
    <citation type="journal article" date="2006" name="Plant Physiol.">
        <title>Gain-of-function phenotypes of many CLAVATA3/ESR genes, including four new family members, correlate with tandem variations in the conserved CLAVATA3/ESR domain.</title>
        <authorList>
            <person name="Strabala T.J."/>
            <person name="O'donnell P.J."/>
            <person name="Smit A.-M."/>
            <person name="Ampomah-Dwamena C."/>
            <person name="Martin E.J."/>
            <person name="Netzler N."/>
            <person name="Nieuwenhuizen N.J."/>
            <person name="Quinn B.D."/>
            <person name="Foote H.C.C."/>
            <person name="Hudson K.R."/>
        </authorList>
    </citation>
    <scope>FUNCTION</scope>
    <scope>GENE FAMILY</scope>
</reference>
<reference key="7">
    <citation type="journal article" date="2006" name="Science">
        <title>Dodeca-CLE peptides as suppressors of plant stem cell differentiation.</title>
        <authorList>
            <person name="Ito Y."/>
            <person name="Nakanomyo I."/>
            <person name="Motose H."/>
            <person name="Iwamoto K."/>
            <person name="Sawa S."/>
            <person name="Dohmae N."/>
            <person name="Fukuda H."/>
        </authorList>
    </citation>
    <scope>FUNCTION</scope>
</reference>
<reference key="8">
    <citation type="journal article" date="2008" name="Cell. Mol. Life Sci.">
        <title>The CLE family of plant polypeptide signaling molecules.</title>
        <authorList>
            <person name="Jun J.H."/>
            <person name="Fiume E."/>
            <person name="Fletcher J.C."/>
        </authorList>
    </citation>
    <scope>REVIEW</scope>
</reference>
<reference key="9">
    <citation type="journal article" date="2008" name="Curr. Opin. Plant Biol.">
        <title>Diverse and conserved roles of CLE peptides.</title>
        <authorList>
            <person name="Mitchum M.G."/>
            <person name="Wang X."/>
            <person name="Davis E.L."/>
        </authorList>
    </citation>
    <scope>REVIEW</scope>
</reference>
<reference key="10">
    <citation type="journal article" date="2010" name="Protoplasma">
        <title>CLE peptide signaling during plant development.</title>
        <authorList>
            <person name="Wang G."/>
            <person name="Fiers M."/>
        </authorList>
    </citation>
    <scope>REVIEW</scope>
</reference>
<reference key="11">
    <citation type="journal article" date="2017" name="EMBO Rep.">
        <title>Perception of root-active CLE peptides requires CORYNE function in the phloem vasculature.</title>
        <authorList>
            <person name="Hazak O."/>
            <person name="Brandt B."/>
            <person name="Cattaneo P."/>
            <person name="Santiago J."/>
            <person name="Rodriguez-Villalon A."/>
            <person name="Hothorn M."/>
            <person name="Hardtke C.S."/>
        </authorList>
    </citation>
    <scope>FUNCTION</scope>
    <source>
        <strain>cv. Columbia</strain>
    </source>
</reference>
<reference key="12">
    <citation type="submission" date="2013-12" db="PDB data bank">
        <title>Inferring function of CLE peptides from high resolution tertiary structures.</title>
        <authorList>
            <person name="DiGennaro P.M."/>
            <person name="Bobay B.G."/>
            <person name="Bird D.M."/>
        </authorList>
    </citation>
    <scope>STRUCTURE BY NMR OF 96-107</scope>
</reference>
<protein>
    <recommendedName>
        <fullName evidence="9">CLAVATA3/ESR (CLE)-related protein 10</fullName>
    </recommendedName>
    <component>
        <recommendedName>
            <fullName evidence="9">CLE10p</fullName>
        </recommendedName>
    </component>
</protein>
<gene>
    <name evidence="9" type="primary">CLE10</name>
    <name evidence="11" type="ordered locus">At1g69320</name>
    <name evidence="12" type="ORF">F23O10.10</name>
</gene>
<evidence type="ECO:0000250" key="1">
    <source>
        <dbReference type="UniProtKB" id="O49519"/>
    </source>
</evidence>
<evidence type="ECO:0000255" key="2"/>
<evidence type="ECO:0000255" key="3">
    <source>
        <dbReference type="PROSITE-ProRule" id="PRU00498"/>
    </source>
</evidence>
<evidence type="ECO:0000256" key="4">
    <source>
        <dbReference type="SAM" id="MobiDB-lite"/>
    </source>
</evidence>
<evidence type="ECO:0000269" key="5">
    <source>
    </source>
</evidence>
<evidence type="ECO:0000269" key="6">
    <source>
    </source>
</evidence>
<evidence type="ECO:0000269" key="7">
    <source>
    </source>
</evidence>
<evidence type="ECO:0000269" key="8">
    <source>
    </source>
</evidence>
<evidence type="ECO:0000303" key="9">
    <source>
    </source>
</evidence>
<evidence type="ECO:0000305" key="10"/>
<evidence type="ECO:0000312" key="11">
    <source>
        <dbReference type="Araport" id="AT1G69320"/>
    </source>
</evidence>
<evidence type="ECO:0000312" key="12">
    <source>
        <dbReference type="EMBL" id="AAG52495.1"/>
    </source>
</evidence>
<evidence type="ECO:0007829" key="13">
    <source>
        <dbReference type="PDB" id="2MID"/>
    </source>
</evidence>